<name>HBX3_DICDI</name>
<sequence>MIVDYQDVDTVISGVDYFSSYNGNIENENCKLSDLFEQNVNNQFFQPNNTSLPPPTNQQPQPQPQQWDLMEDENCNSSFENSPQQPTSPLLISSQTSYPSDLSSNSSISHSPIENQLLDNNLDINNYLNKINIFNNHFQNSDLINTTFFNQFENNNYINNNNNKENNSYFYNNNVNIPNNNNLNINNNNNNNNNNNNNNNNNNNNNNNNNNNNNNNNNNNNNNNNNKNTVYNNVNIPNNNNFNLNLSNNNNNLNLTNNNNNKNSVNNNNVNISNNNNNNNFNVNLSNNNVNISNIPISNYYQQAAQTIFDDNFQTIQFNKEYPLNEHISQSTNKRMKISHHSHSLSNNNENSLSQPYFNNNNNNNNENENVYNIVNEQNPTFNPNQSNTHQQQEEQYQQHEEGQEEKEHEEEEKYQKQKPKIEIEELININLIKEKIEKLKNKFENENVICSEFLEKCFKFSSFPIFPIVESKLKFYQFEIDFSFSSYIESQKLDKIGLPSFKRPVQFLNTFYTQEIVNLDQELITRSQPIHDFIECISLIRPLLSLSSSSSSSSSSSSPSSSNELNSKLNMVQSVFNVVKSYQKTNTANVILQVLKKYAKEFKSRRILSEQQETNMNLWFDAHVNNPYPEEDEKVILGAVNNLSKSQIDNWFGNKRMRDKSNKKSL</sequence>
<dbReference type="EMBL" id="AAFI02000175">
    <property type="protein sequence ID" value="EAL61882.1"/>
    <property type="molecule type" value="Genomic_DNA"/>
</dbReference>
<dbReference type="RefSeq" id="XP_635379.1">
    <property type="nucleotide sequence ID" value="XM_630287.1"/>
</dbReference>
<dbReference type="FunCoup" id="Q54F11">
    <property type="interactions" value="388"/>
</dbReference>
<dbReference type="STRING" id="44689.Q54F11"/>
<dbReference type="PaxDb" id="44689-DDB0220480"/>
<dbReference type="EnsemblProtists" id="EAL61882">
    <property type="protein sequence ID" value="EAL61882"/>
    <property type="gene ID" value="DDB_G0291197"/>
</dbReference>
<dbReference type="GeneID" id="8628027"/>
<dbReference type="KEGG" id="ddi:DDB_G0291197"/>
<dbReference type="dictyBase" id="DDB_G0291197">
    <property type="gene designation" value="hbx3"/>
</dbReference>
<dbReference type="VEuPathDB" id="AmoebaDB:DDB_G0291197"/>
<dbReference type="eggNOG" id="KOG0774">
    <property type="taxonomic scope" value="Eukaryota"/>
</dbReference>
<dbReference type="HOGENOM" id="CLU_411872_0_0_1"/>
<dbReference type="InParanoid" id="Q54F11"/>
<dbReference type="OMA" id="LMEDENC"/>
<dbReference type="PRO" id="PR:Q54F11"/>
<dbReference type="Proteomes" id="UP000002195">
    <property type="component" value="Chromosome 5"/>
</dbReference>
<dbReference type="GO" id="GO:0005634">
    <property type="term" value="C:nucleus"/>
    <property type="evidence" value="ECO:0000318"/>
    <property type="project" value="GO_Central"/>
</dbReference>
<dbReference type="GO" id="GO:0000981">
    <property type="term" value="F:DNA-binding transcription factor activity, RNA polymerase II-specific"/>
    <property type="evidence" value="ECO:0000318"/>
    <property type="project" value="GO_Central"/>
</dbReference>
<dbReference type="GO" id="GO:0000978">
    <property type="term" value="F:RNA polymerase II cis-regulatory region sequence-specific DNA binding"/>
    <property type="evidence" value="ECO:0000318"/>
    <property type="project" value="GO_Central"/>
</dbReference>
<dbReference type="GO" id="GO:0048468">
    <property type="term" value="P:cell development"/>
    <property type="evidence" value="ECO:0000318"/>
    <property type="project" value="GO_Central"/>
</dbReference>
<dbReference type="GO" id="GO:0006357">
    <property type="term" value="P:regulation of transcription by RNA polymerase II"/>
    <property type="evidence" value="ECO:0000318"/>
    <property type="project" value="GO_Central"/>
</dbReference>
<dbReference type="CDD" id="cd00086">
    <property type="entry name" value="homeodomain"/>
    <property type="match status" value="1"/>
</dbReference>
<dbReference type="Gene3D" id="1.10.10.60">
    <property type="entry name" value="Homeodomain-like"/>
    <property type="match status" value="1"/>
</dbReference>
<dbReference type="InterPro" id="IPR001356">
    <property type="entry name" value="HD"/>
</dbReference>
<dbReference type="InterPro" id="IPR009057">
    <property type="entry name" value="Homeodomain-like_sf"/>
</dbReference>
<dbReference type="InterPro" id="IPR008422">
    <property type="entry name" value="KN_HD"/>
</dbReference>
<dbReference type="PANTHER" id="PTHR11211:SF3">
    <property type="entry name" value="HOMEOBOX PROTEIN MOHAWK"/>
    <property type="match status" value="1"/>
</dbReference>
<dbReference type="PANTHER" id="PTHR11211">
    <property type="entry name" value="IROQUOIS-CLASS HOMEODOMAIN PROTEIN IRX"/>
    <property type="match status" value="1"/>
</dbReference>
<dbReference type="Pfam" id="PF05920">
    <property type="entry name" value="Homeobox_KN"/>
    <property type="match status" value="1"/>
</dbReference>
<dbReference type="SMART" id="SM00389">
    <property type="entry name" value="HOX"/>
    <property type="match status" value="1"/>
</dbReference>
<dbReference type="SUPFAM" id="SSF46689">
    <property type="entry name" value="Homeodomain-like"/>
    <property type="match status" value="1"/>
</dbReference>
<dbReference type="PROSITE" id="PS50071">
    <property type="entry name" value="HOMEOBOX_2"/>
    <property type="match status" value="1"/>
</dbReference>
<organism>
    <name type="scientific">Dictyostelium discoideum</name>
    <name type="common">Social amoeba</name>
    <dbReference type="NCBI Taxonomy" id="44689"/>
    <lineage>
        <taxon>Eukaryota</taxon>
        <taxon>Amoebozoa</taxon>
        <taxon>Evosea</taxon>
        <taxon>Eumycetozoa</taxon>
        <taxon>Dictyostelia</taxon>
        <taxon>Dictyosteliales</taxon>
        <taxon>Dictyosteliaceae</taxon>
        <taxon>Dictyostelium</taxon>
    </lineage>
</organism>
<evidence type="ECO:0000250" key="1"/>
<evidence type="ECO:0000255" key="2"/>
<evidence type="ECO:0000255" key="3">
    <source>
        <dbReference type="PROSITE-ProRule" id="PRU00108"/>
    </source>
</evidence>
<evidence type="ECO:0000256" key="4">
    <source>
        <dbReference type="SAM" id="MobiDB-lite"/>
    </source>
</evidence>
<evidence type="ECO:0000269" key="5">
    <source>
    </source>
</evidence>
<reference key="1">
    <citation type="journal article" date="2005" name="Nature">
        <title>The genome of the social amoeba Dictyostelium discoideum.</title>
        <authorList>
            <person name="Eichinger L."/>
            <person name="Pachebat J.A."/>
            <person name="Gloeckner G."/>
            <person name="Rajandream M.A."/>
            <person name="Sucgang R."/>
            <person name="Berriman M."/>
            <person name="Song J."/>
            <person name="Olsen R."/>
            <person name="Szafranski K."/>
            <person name="Xu Q."/>
            <person name="Tunggal B."/>
            <person name="Kummerfeld S."/>
            <person name="Madera M."/>
            <person name="Konfortov B.A."/>
            <person name="Rivero F."/>
            <person name="Bankier A.T."/>
            <person name="Lehmann R."/>
            <person name="Hamlin N."/>
            <person name="Davies R."/>
            <person name="Gaudet P."/>
            <person name="Fey P."/>
            <person name="Pilcher K."/>
            <person name="Chen G."/>
            <person name="Saunders D."/>
            <person name="Sodergren E.J."/>
            <person name="Davis P."/>
            <person name="Kerhornou A."/>
            <person name="Nie X."/>
            <person name="Hall N."/>
            <person name="Anjard C."/>
            <person name="Hemphill L."/>
            <person name="Bason N."/>
            <person name="Farbrother P."/>
            <person name="Desany B."/>
            <person name="Just E."/>
            <person name="Morio T."/>
            <person name="Rost R."/>
            <person name="Churcher C.M."/>
            <person name="Cooper J."/>
            <person name="Haydock S."/>
            <person name="van Driessche N."/>
            <person name="Cronin A."/>
            <person name="Goodhead I."/>
            <person name="Muzny D.M."/>
            <person name="Mourier T."/>
            <person name="Pain A."/>
            <person name="Lu M."/>
            <person name="Harper D."/>
            <person name="Lindsay R."/>
            <person name="Hauser H."/>
            <person name="James K.D."/>
            <person name="Quiles M."/>
            <person name="Madan Babu M."/>
            <person name="Saito T."/>
            <person name="Buchrieser C."/>
            <person name="Wardroper A."/>
            <person name="Felder M."/>
            <person name="Thangavelu M."/>
            <person name="Johnson D."/>
            <person name="Knights A."/>
            <person name="Loulseged H."/>
            <person name="Mungall K.L."/>
            <person name="Oliver K."/>
            <person name="Price C."/>
            <person name="Quail M.A."/>
            <person name="Urushihara H."/>
            <person name="Hernandez J."/>
            <person name="Rabbinowitsch E."/>
            <person name="Steffen D."/>
            <person name="Sanders M."/>
            <person name="Ma J."/>
            <person name="Kohara Y."/>
            <person name="Sharp S."/>
            <person name="Simmonds M.N."/>
            <person name="Spiegler S."/>
            <person name="Tivey A."/>
            <person name="Sugano S."/>
            <person name="White B."/>
            <person name="Walker D."/>
            <person name="Woodward J.R."/>
            <person name="Winckler T."/>
            <person name="Tanaka Y."/>
            <person name="Shaulsky G."/>
            <person name="Schleicher M."/>
            <person name="Weinstock G.M."/>
            <person name="Rosenthal A."/>
            <person name="Cox E.C."/>
            <person name="Chisholm R.L."/>
            <person name="Gibbs R.A."/>
            <person name="Loomis W.F."/>
            <person name="Platzer M."/>
            <person name="Kay R.R."/>
            <person name="Williams J.G."/>
            <person name="Dear P.H."/>
            <person name="Noegel A.A."/>
            <person name="Barrell B.G."/>
            <person name="Kuspa A."/>
        </authorList>
    </citation>
    <scope>NUCLEOTIDE SEQUENCE [LARGE SCALE GENOMIC DNA]</scope>
    <source>
        <strain>AX4</strain>
    </source>
</reference>
<reference key="2">
    <citation type="journal article" date="2008" name="BMC Genomics">
        <title>Genome-wide transcriptional changes induced by phagocytosis or growth on bacteria in Dictyostelium.</title>
        <authorList>
            <person name="Sillo A."/>
            <person name="Bloomfield G."/>
            <person name="Balest A."/>
            <person name="Balbo A."/>
            <person name="Pergolizzi B."/>
            <person name="Peracino B."/>
            <person name="Skelton J."/>
            <person name="Ivens A."/>
            <person name="Bozzaro S."/>
        </authorList>
    </citation>
    <scope>INDUCTION [LARGE SCALE ANALYSIS]</scope>
</reference>
<accession>Q54F11</accession>
<keyword id="KW-0175">Coiled coil</keyword>
<keyword id="KW-0217">Developmental protein</keyword>
<keyword id="KW-0238">DNA-binding</keyword>
<keyword id="KW-0371">Homeobox</keyword>
<keyword id="KW-0539">Nucleus</keyword>
<keyword id="KW-1185">Reference proteome</keyword>
<keyword id="KW-0804">Transcription</keyword>
<keyword id="KW-0805">Transcription regulation</keyword>
<feature type="chain" id="PRO_0000388787" description="Homeobox protein 3">
    <location>
        <begin position="1"/>
        <end position="667"/>
    </location>
</feature>
<feature type="DNA-binding region" description="Homeobox" evidence="3">
    <location>
        <begin position="602"/>
        <end position="664"/>
    </location>
</feature>
<feature type="region of interest" description="Disordered" evidence="4">
    <location>
        <begin position="44"/>
        <end position="108"/>
    </location>
</feature>
<feature type="region of interest" description="Disordered" evidence="4">
    <location>
        <begin position="179"/>
        <end position="232"/>
    </location>
</feature>
<feature type="region of interest" description="Disordered" evidence="4">
    <location>
        <begin position="249"/>
        <end position="268"/>
    </location>
</feature>
<feature type="region of interest" description="Disordered" evidence="4">
    <location>
        <begin position="331"/>
        <end position="418"/>
    </location>
</feature>
<feature type="coiled-coil region" evidence="2">
    <location>
        <begin position="386"/>
        <end position="454"/>
    </location>
</feature>
<feature type="compositionally biased region" description="Pro residues" evidence="4">
    <location>
        <begin position="52"/>
        <end position="63"/>
    </location>
</feature>
<feature type="compositionally biased region" description="Polar residues" evidence="4">
    <location>
        <begin position="75"/>
        <end position="96"/>
    </location>
</feature>
<feature type="compositionally biased region" description="Low complexity" evidence="4">
    <location>
        <begin position="97"/>
        <end position="108"/>
    </location>
</feature>
<feature type="compositionally biased region" description="Basic residues" evidence="4">
    <location>
        <begin position="334"/>
        <end position="343"/>
    </location>
</feature>
<feature type="compositionally biased region" description="Low complexity" evidence="4">
    <location>
        <begin position="344"/>
        <end position="379"/>
    </location>
</feature>
<feature type="compositionally biased region" description="Polar residues" evidence="4">
    <location>
        <begin position="380"/>
        <end position="390"/>
    </location>
</feature>
<protein>
    <recommendedName>
        <fullName>Homeobox protein 3</fullName>
        <shortName>DdHbx-3</shortName>
    </recommendedName>
</protein>
<comment type="function">
    <text evidence="1">Putative transcription factor.</text>
</comment>
<comment type="subcellular location">
    <subcellularLocation>
        <location evidence="3">Nucleus</location>
    </subcellularLocation>
</comment>
<comment type="induction">
    <text evidence="5">Up-regulated by phagocytic stimuli.</text>
</comment>
<gene>
    <name type="primary">hbx3</name>
    <name type="ORF">DDB_G0291197</name>
</gene>
<proteinExistence type="evidence at transcript level"/>